<evidence type="ECO:0000255" key="1">
    <source>
        <dbReference type="HAMAP-Rule" id="MF_01633"/>
    </source>
</evidence>
<feature type="chain" id="PRO_1000215797" description="7-cyano-7-deazaguanine synthase">
    <location>
        <begin position="1"/>
        <end position="224"/>
    </location>
</feature>
<feature type="binding site" evidence="1">
    <location>
        <begin position="10"/>
        <end position="20"/>
    </location>
    <ligand>
        <name>ATP</name>
        <dbReference type="ChEBI" id="CHEBI:30616"/>
    </ligand>
</feature>
<feature type="binding site" evidence="1">
    <location>
        <position position="189"/>
    </location>
    <ligand>
        <name>Zn(2+)</name>
        <dbReference type="ChEBI" id="CHEBI:29105"/>
    </ligand>
</feature>
<feature type="binding site" evidence="1">
    <location>
        <position position="199"/>
    </location>
    <ligand>
        <name>Zn(2+)</name>
        <dbReference type="ChEBI" id="CHEBI:29105"/>
    </ligand>
</feature>
<feature type="binding site" evidence="1">
    <location>
        <position position="202"/>
    </location>
    <ligand>
        <name>Zn(2+)</name>
        <dbReference type="ChEBI" id="CHEBI:29105"/>
    </ligand>
</feature>
<feature type="binding site" evidence="1">
    <location>
        <position position="205"/>
    </location>
    <ligand>
        <name>Zn(2+)</name>
        <dbReference type="ChEBI" id="CHEBI:29105"/>
    </ligand>
</feature>
<protein>
    <recommendedName>
        <fullName evidence="1">7-cyano-7-deazaguanine synthase</fullName>
        <ecNumber evidence="1">6.3.4.20</ecNumber>
    </recommendedName>
    <alternativeName>
        <fullName evidence="1">7-cyano-7-carbaguanine synthase</fullName>
    </alternativeName>
    <alternativeName>
        <fullName evidence="1">PreQ(0) synthase</fullName>
    </alternativeName>
    <alternativeName>
        <fullName evidence="1">Queuosine biosynthesis protein QueC</fullName>
    </alternativeName>
</protein>
<dbReference type="EC" id="6.3.4.20" evidence="1"/>
<dbReference type="EMBL" id="AM181176">
    <property type="protein sequence ID" value="CAY51802.1"/>
    <property type="molecule type" value="Genomic_DNA"/>
</dbReference>
<dbReference type="RefSeq" id="WP_015885604.1">
    <property type="nucleotide sequence ID" value="NC_012660.1"/>
</dbReference>
<dbReference type="SMR" id="C3JYR8"/>
<dbReference type="STRING" id="294.SRM1_04335"/>
<dbReference type="GeneID" id="93466518"/>
<dbReference type="eggNOG" id="COG0603">
    <property type="taxonomic scope" value="Bacteria"/>
</dbReference>
<dbReference type="HOGENOM" id="CLU_081854_1_1_6"/>
<dbReference type="OrthoDB" id="9789567at2"/>
<dbReference type="UniPathway" id="UPA00391"/>
<dbReference type="GO" id="GO:0005524">
    <property type="term" value="F:ATP binding"/>
    <property type="evidence" value="ECO:0007669"/>
    <property type="project" value="UniProtKB-UniRule"/>
</dbReference>
<dbReference type="GO" id="GO:0016879">
    <property type="term" value="F:ligase activity, forming carbon-nitrogen bonds"/>
    <property type="evidence" value="ECO:0007669"/>
    <property type="project" value="UniProtKB-UniRule"/>
</dbReference>
<dbReference type="GO" id="GO:0008270">
    <property type="term" value="F:zinc ion binding"/>
    <property type="evidence" value="ECO:0007669"/>
    <property type="project" value="UniProtKB-UniRule"/>
</dbReference>
<dbReference type="GO" id="GO:0008616">
    <property type="term" value="P:queuosine biosynthetic process"/>
    <property type="evidence" value="ECO:0007669"/>
    <property type="project" value="UniProtKB-UniRule"/>
</dbReference>
<dbReference type="CDD" id="cd01995">
    <property type="entry name" value="QueC-like"/>
    <property type="match status" value="1"/>
</dbReference>
<dbReference type="FunFam" id="3.40.50.620:FF:000131">
    <property type="entry name" value="7-cyano-7-deazaguanine synthase"/>
    <property type="match status" value="1"/>
</dbReference>
<dbReference type="Gene3D" id="3.40.50.620">
    <property type="entry name" value="HUPs"/>
    <property type="match status" value="1"/>
</dbReference>
<dbReference type="HAMAP" id="MF_01633">
    <property type="entry name" value="QueC"/>
    <property type="match status" value="1"/>
</dbReference>
<dbReference type="InterPro" id="IPR018317">
    <property type="entry name" value="QueC"/>
</dbReference>
<dbReference type="InterPro" id="IPR014729">
    <property type="entry name" value="Rossmann-like_a/b/a_fold"/>
</dbReference>
<dbReference type="NCBIfam" id="TIGR00364">
    <property type="entry name" value="7-cyano-7-deazaguanine synthase QueC"/>
    <property type="match status" value="1"/>
</dbReference>
<dbReference type="PANTHER" id="PTHR42914">
    <property type="entry name" value="7-CYANO-7-DEAZAGUANINE SYNTHASE"/>
    <property type="match status" value="1"/>
</dbReference>
<dbReference type="PANTHER" id="PTHR42914:SF1">
    <property type="entry name" value="7-CYANO-7-DEAZAGUANINE SYNTHASE"/>
    <property type="match status" value="1"/>
</dbReference>
<dbReference type="Pfam" id="PF06508">
    <property type="entry name" value="QueC"/>
    <property type="match status" value="1"/>
</dbReference>
<dbReference type="PIRSF" id="PIRSF006293">
    <property type="entry name" value="ExsB"/>
    <property type="match status" value="1"/>
</dbReference>
<dbReference type="SUPFAM" id="SSF52402">
    <property type="entry name" value="Adenine nucleotide alpha hydrolases-like"/>
    <property type="match status" value="1"/>
</dbReference>
<comment type="function">
    <text evidence="1">Catalyzes the ATP-dependent conversion of 7-carboxy-7-deazaguanine (CDG) to 7-cyano-7-deazaguanine (preQ(0)).</text>
</comment>
<comment type="catalytic activity">
    <reaction evidence="1">
        <text>7-carboxy-7-deazaguanine + NH4(+) + ATP = 7-cyano-7-deazaguanine + ADP + phosphate + H2O + H(+)</text>
        <dbReference type="Rhea" id="RHEA:27982"/>
        <dbReference type="ChEBI" id="CHEBI:15377"/>
        <dbReference type="ChEBI" id="CHEBI:15378"/>
        <dbReference type="ChEBI" id="CHEBI:28938"/>
        <dbReference type="ChEBI" id="CHEBI:30616"/>
        <dbReference type="ChEBI" id="CHEBI:43474"/>
        <dbReference type="ChEBI" id="CHEBI:45075"/>
        <dbReference type="ChEBI" id="CHEBI:61036"/>
        <dbReference type="ChEBI" id="CHEBI:456216"/>
        <dbReference type="EC" id="6.3.4.20"/>
    </reaction>
</comment>
<comment type="cofactor">
    <cofactor evidence="1">
        <name>Zn(2+)</name>
        <dbReference type="ChEBI" id="CHEBI:29105"/>
    </cofactor>
    <text evidence="1">Binds 1 zinc ion per subunit.</text>
</comment>
<comment type="pathway">
    <text evidence="1">Purine metabolism; 7-cyano-7-deazaguanine biosynthesis.</text>
</comment>
<comment type="similarity">
    <text evidence="1">Belongs to the QueC family.</text>
</comment>
<reference key="1">
    <citation type="journal article" date="2009" name="Genome Biol.">
        <title>Genomic and genetic analyses of diversity and plant interactions of Pseudomonas fluorescens.</title>
        <authorList>
            <person name="Silby M.W."/>
            <person name="Cerdeno-Tarraga A.M."/>
            <person name="Vernikos G.S."/>
            <person name="Giddens S.R."/>
            <person name="Jackson R.W."/>
            <person name="Preston G.M."/>
            <person name="Zhang X.-X."/>
            <person name="Moon C.D."/>
            <person name="Gehrig S.M."/>
            <person name="Godfrey S.A.C."/>
            <person name="Knight C.G."/>
            <person name="Malone J.G."/>
            <person name="Robinson Z."/>
            <person name="Spiers A.J."/>
            <person name="Harris S."/>
            <person name="Challis G.L."/>
            <person name="Yaxley A.M."/>
            <person name="Harris D."/>
            <person name="Seeger K."/>
            <person name="Murphy L."/>
            <person name="Rutter S."/>
            <person name="Squares R."/>
            <person name="Quail M.A."/>
            <person name="Saunders E."/>
            <person name="Mavromatis K."/>
            <person name="Brettin T.S."/>
            <person name="Bentley S.D."/>
            <person name="Hothersall J."/>
            <person name="Stephens E."/>
            <person name="Thomas C.M."/>
            <person name="Parkhill J."/>
            <person name="Levy S.B."/>
            <person name="Rainey P.B."/>
            <person name="Thomson N.R."/>
        </authorList>
    </citation>
    <scope>NUCLEOTIDE SEQUENCE [LARGE SCALE GENOMIC DNA]</scope>
    <source>
        <strain>SBW25</strain>
    </source>
</reference>
<name>QUEC_PSEFS</name>
<sequence length="224" mass="23842">MDQKRAVILLSGGLDSATVVAMAQAQGYSCYTMSFDYGQRHRAELNAAARVARDMGVVEHKVIGLNLNGIGGSALTDSSIDVPEAPSEGIPVTYVPARNTVFLSLALGWAEVLNARDIFIGVNAVDYSGYPDCRPEFVESFERMANLATKAGVEGQGFRILAPLQNLSKADIVKAGVGLGVDYSLTVSCYQADDDGRACGKCDSCRLRAEGFQAAGIADPTRYF</sequence>
<organism>
    <name type="scientific">Pseudomonas fluorescens (strain SBW25)</name>
    <dbReference type="NCBI Taxonomy" id="216595"/>
    <lineage>
        <taxon>Bacteria</taxon>
        <taxon>Pseudomonadati</taxon>
        <taxon>Pseudomonadota</taxon>
        <taxon>Gammaproteobacteria</taxon>
        <taxon>Pseudomonadales</taxon>
        <taxon>Pseudomonadaceae</taxon>
        <taxon>Pseudomonas</taxon>
    </lineage>
</organism>
<proteinExistence type="inferred from homology"/>
<keyword id="KW-0067">ATP-binding</keyword>
<keyword id="KW-0436">Ligase</keyword>
<keyword id="KW-0479">Metal-binding</keyword>
<keyword id="KW-0547">Nucleotide-binding</keyword>
<keyword id="KW-0671">Queuosine biosynthesis</keyword>
<keyword id="KW-0862">Zinc</keyword>
<gene>
    <name evidence="1" type="primary">queC</name>
    <name type="ordered locus">PFLU_4904</name>
</gene>
<accession>C3JYR8</accession>